<name>RH36_ARATH</name>
<protein>
    <recommendedName>
        <fullName>DEAD-box ATP-dependent RNA helicase 36</fullName>
        <ecNumber>3.6.4.13</ecNumber>
    </recommendedName>
</protein>
<comment type="catalytic activity">
    <reaction>
        <text>ATP + H2O = ADP + phosphate + H(+)</text>
        <dbReference type="Rhea" id="RHEA:13065"/>
        <dbReference type="ChEBI" id="CHEBI:15377"/>
        <dbReference type="ChEBI" id="CHEBI:15378"/>
        <dbReference type="ChEBI" id="CHEBI:30616"/>
        <dbReference type="ChEBI" id="CHEBI:43474"/>
        <dbReference type="ChEBI" id="CHEBI:456216"/>
        <dbReference type="EC" id="3.6.4.13"/>
    </reaction>
</comment>
<comment type="domain">
    <text>The Q motif is unique to and characteristic of the DEAD box family of RNA helicases and controls ATP binding and hydrolysis.</text>
</comment>
<comment type="similarity">
    <text evidence="4">Belongs to the DEAD box helicase family. DDX49/DBP8 subfamily.</text>
</comment>
<keyword id="KW-0067">ATP-binding</keyword>
<keyword id="KW-0347">Helicase</keyword>
<keyword id="KW-0378">Hydrolase</keyword>
<keyword id="KW-0547">Nucleotide-binding</keyword>
<keyword id="KW-1185">Reference proteome</keyword>
<dbReference type="EC" id="3.6.4.13"/>
<dbReference type="EMBL" id="AC006341">
    <property type="protein sequence ID" value="AAD34681.1"/>
    <property type="molecule type" value="Genomic_DNA"/>
</dbReference>
<dbReference type="EMBL" id="CP002684">
    <property type="protein sequence ID" value="AEE29431.1"/>
    <property type="molecule type" value="Genomic_DNA"/>
</dbReference>
<dbReference type="PIR" id="G86297">
    <property type="entry name" value="G86297"/>
</dbReference>
<dbReference type="RefSeq" id="NP_173078.1">
    <property type="nucleotide sequence ID" value="NM_101494.2"/>
</dbReference>
<dbReference type="SMR" id="Q9SA27"/>
<dbReference type="FunCoup" id="Q9SA27">
    <property type="interactions" value="2703"/>
</dbReference>
<dbReference type="STRING" id="3702.Q9SA27"/>
<dbReference type="iPTMnet" id="Q9SA27"/>
<dbReference type="PaxDb" id="3702-AT1G16280.1"/>
<dbReference type="ProteomicsDB" id="236972"/>
<dbReference type="EnsemblPlants" id="AT1G16280.1">
    <property type="protein sequence ID" value="AT1G16280.1"/>
    <property type="gene ID" value="AT1G16280"/>
</dbReference>
<dbReference type="GeneID" id="838197"/>
<dbReference type="Gramene" id="AT1G16280.1">
    <property type="protein sequence ID" value="AT1G16280.1"/>
    <property type="gene ID" value="AT1G16280"/>
</dbReference>
<dbReference type="KEGG" id="ath:AT1G16280"/>
<dbReference type="Araport" id="AT1G16280"/>
<dbReference type="TAIR" id="AT1G16280">
    <property type="gene designation" value="RH36"/>
</dbReference>
<dbReference type="eggNOG" id="KOG0340">
    <property type="taxonomic scope" value="Eukaryota"/>
</dbReference>
<dbReference type="HOGENOM" id="CLU_003041_1_1_1"/>
<dbReference type="InParanoid" id="Q9SA27"/>
<dbReference type="OMA" id="IMIFTDT"/>
<dbReference type="PhylomeDB" id="Q9SA27"/>
<dbReference type="CD-CODE" id="4299E36E">
    <property type="entry name" value="Nucleolus"/>
</dbReference>
<dbReference type="PRO" id="PR:Q9SA27"/>
<dbReference type="Proteomes" id="UP000006548">
    <property type="component" value="Chromosome 1"/>
</dbReference>
<dbReference type="ExpressionAtlas" id="Q9SA27">
    <property type="expression patterns" value="baseline and differential"/>
</dbReference>
<dbReference type="GO" id="GO:0005634">
    <property type="term" value="C:nucleus"/>
    <property type="evidence" value="ECO:0000314"/>
    <property type="project" value="TAIR"/>
</dbReference>
<dbReference type="GO" id="GO:0090406">
    <property type="term" value="C:pollen tube"/>
    <property type="evidence" value="ECO:0000314"/>
    <property type="project" value="TAIR"/>
</dbReference>
<dbReference type="GO" id="GO:0005524">
    <property type="term" value="F:ATP binding"/>
    <property type="evidence" value="ECO:0007669"/>
    <property type="project" value="UniProtKB-KW"/>
</dbReference>
<dbReference type="GO" id="GO:0016887">
    <property type="term" value="F:ATP hydrolysis activity"/>
    <property type="evidence" value="ECO:0007669"/>
    <property type="project" value="RHEA"/>
</dbReference>
<dbReference type="GO" id="GO:0003676">
    <property type="term" value="F:nucleic acid binding"/>
    <property type="evidence" value="ECO:0007669"/>
    <property type="project" value="InterPro"/>
</dbReference>
<dbReference type="GO" id="GO:0003724">
    <property type="term" value="F:RNA helicase activity"/>
    <property type="evidence" value="ECO:0007669"/>
    <property type="project" value="UniProtKB-EC"/>
</dbReference>
<dbReference type="GO" id="GO:0009553">
    <property type="term" value="P:embryo sac development"/>
    <property type="evidence" value="ECO:0000315"/>
    <property type="project" value="TAIR"/>
</dbReference>
<dbReference type="GO" id="GO:0009561">
    <property type="term" value="P:megagametogenesis"/>
    <property type="evidence" value="ECO:0000315"/>
    <property type="project" value="TAIR"/>
</dbReference>
<dbReference type="GO" id="GO:0009791">
    <property type="term" value="P:post-embryonic development"/>
    <property type="evidence" value="ECO:0000315"/>
    <property type="project" value="TAIR"/>
</dbReference>
<dbReference type="GO" id="GO:0006364">
    <property type="term" value="P:rRNA processing"/>
    <property type="evidence" value="ECO:0000315"/>
    <property type="project" value="TAIR"/>
</dbReference>
<dbReference type="CDD" id="cd17955">
    <property type="entry name" value="DEADc_DDX49"/>
    <property type="match status" value="1"/>
</dbReference>
<dbReference type="CDD" id="cd18787">
    <property type="entry name" value="SF2_C_DEAD"/>
    <property type="match status" value="1"/>
</dbReference>
<dbReference type="FunFam" id="3.40.50.300:FF:004001">
    <property type="entry name" value="DEAD-box ATP-dependent RNA helicase 36"/>
    <property type="match status" value="1"/>
</dbReference>
<dbReference type="Gene3D" id="3.40.50.300">
    <property type="entry name" value="P-loop containing nucleotide triphosphate hydrolases"/>
    <property type="match status" value="2"/>
</dbReference>
<dbReference type="InterPro" id="IPR011545">
    <property type="entry name" value="DEAD/DEAH_box_helicase_dom"/>
</dbReference>
<dbReference type="InterPro" id="IPR050079">
    <property type="entry name" value="DEAD_box_RNA_helicase"/>
</dbReference>
<dbReference type="InterPro" id="IPR014001">
    <property type="entry name" value="Helicase_ATP-bd"/>
</dbReference>
<dbReference type="InterPro" id="IPR001650">
    <property type="entry name" value="Helicase_C-like"/>
</dbReference>
<dbReference type="InterPro" id="IPR027417">
    <property type="entry name" value="P-loop_NTPase"/>
</dbReference>
<dbReference type="InterPro" id="IPR000629">
    <property type="entry name" value="RNA-helicase_DEAD-box_CS"/>
</dbReference>
<dbReference type="InterPro" id="IPR014014">
    <property type="entry name" value="RNA_helicase_DEAD_Q_motif"/>
</dbReference>
<dbReference type="PANTHER" id="PTHR47959:SF24">
    <property type="entry name" value="ATP-DEPENDENT RNA HELICASE"/>
    <property type="match status" value="1"/>
</dbReference>
<dbReference type="PANTHER" id="PTHR47959">
    <property type="entry name" value="ATP-DEPENDENT RNA HELICASE RHLE-RELATED"/>
    <property type="match status" value="1"/>
</dbReference>
<dbReference type="Pfam" id="PF00270">
    <property type="entry name" value="DEAD"/>
    <property type="match status" value="1"/>
</dbReference>
<dbReference type="Pfam" id="PF00271">
    <property type="entry name" value="Helicase_C"/>
    <property type="match status" value="1"/>
</dbReference>
<dbReference type="SMART" id="SM00487">
    <property type="entry name" value="DEXDc"/>
    <property type="match status" value="1"/>
</dbReference>
<dbReference type="SMART" id="SM00490">
    <property type="entry name" value="HELICc"/>
    <property type="match status" value="1"/>
</dbReference>
<dbReference type="SUPFAM" id="SSF52540">
    <property type="entry name" value="P-loop containing nucleoside triphosphate hydrolases"/>
    <property type="match status" value="1"/>
</dbReference>
<dbReference type="PROSITE" id="PS00039">
    <property type="entry name" value="DEAD_ATP_HELICASE"/>
    <property type="match status" value="1"/>
</dbReference>
<dbReference type="PROSITE" id="PS51192">
    <property type="entry name" value="HELICASE_ATP_BIND_1"/>
    <property type="match status" value="1"/>
</dbReference>
<dbReference type="PROSITE" id="PS51194">
    <property type="entry name" value="HELICASE_CTER"/>
    <property type="match status" value="1"/>
</dbReference>
<dbReference type="PROSITE" id="PS51195">
    <property type="entry name" value="Q_MOTIF"/>
    <property type="match status" value="1"/>
</dbReference>
<evidence type="ECO:0000255" key="1">
    <source>
        <dbReference type="PROSITE-ProRule" id="PRU00541"/>
    </source>
</evidence>
<evidence type="ECO:0000255" key="2">
    <source>
        <dbReference type="PROSITE-ProRule" id="PRU00542"/>
    </source>
</evidence>
<evidence type="ECO:0000256" key="3">
    <source>
        <dbReference type="SAM" id="MobiDB-lite"/>
    </source>
</evidence>
<evidence type="ECO:0000305" key="4"/>
<organism>
    <name type="scientific">Arabidopsis thaliana</name>
    <name type="common">Mouse-ear cress</name>
    <dbReference type="NCBI Taxonomy" id="3702"/>
    <lineage>
        <taxon>Eukaryota</taxon>
        <taxon>Viridiplantae</taxon>
        <taxon>Streptophyta</taxon>
        <taxon>Embryophyta</taxon>
        <taxon>Tracheophyta</taxon>
        <taxon>Spermatophyta</taxon>
        <taxon>Magnoliopsida</taxon>
        <taxon>eudicotyledons</taxon>
        <taxon>Gunneridae</taxon>
        <taxon>Pentapetalae</taxon>
        <taxon>rosids</taxon>
        <taxon>malvids</taxon>
        <taxon>Brassicales</taxon>
        <taxon>Brassicaceae</taxon>
        <taxon>Camelineae</taxon>
        <taxon>Arabidopsis</taxon>
    </lineage>
</organism>
<accession>Q9SA27</accession>
<gene>
    <name type="primary">RH36</name>
    <name type="ordered locus">At1g16280</name>
    <name type="ORF">F3O9.8</name>
</gene>
<proteinExistence type="evidence at transcript level"/>
<feature type="chain" id="PRO_0000239176" description="DEAD-box ATP-dependent RNA helicase 36">
    <location>
        <begin position="1"/>
        <end position="491"/>
    </location>
</feature>
<feature type="domain" description="Helicase ATP-binding" evidence="1">
    <location>
        <begin position="89"/>
        <end position="262"/>
    </location>
</feature>
<feature type="domain" description="Helicase C-terminal" evidence="2">
    <location>
        <begin position="289"/>
        <end position="438"/>
    </location>
</feature>
<feature type="region of interest" description="Disordered" evidence="3">
    <location>
        <begin position="1"/>
        <end position="56"/>
    </location>
</feature>
<feature type="region of interest" description="Disordered" evidence="3">
    <location>
        <begin position="471"/>
        <end position="491"/>
    </location>
</feature>
<feature type="short sequence motif" description="Q motif">
    <location>
        <begin position="58"/>
        <end position="86"/>
    </location>
</feature>
<feature type="short sequence motif" description="DEAD box">
    <location>
        <begin position="210"/>
        <end position="213"/>
    </location>
</feature>
<feature type="compositionally biased region" description="Acidic residues" evidence="3">
    <location>
        <begin position="1"/>
        <end position="10"/>
    </location>
</feature>
<feature type="compositionally biased region" description="Polar residues" evidence="3">
    <location>
        <begin position="24"/>
        <end position="56"/>
    </location>
</feature>
<feature type="compositionally biased region" description="Basic residues" evidence="3">
    <location>
        <begin position="479"/>
        <end position="491"/>
    </location>
</feature>
<feature type="binding site" evidence="1">
    <location>
        <begin position="102"/>
        <end position="109"/>
    </location>
    <ligand>
        <name>ATP</name>
        <dbReference type="ChEBI" id="CHEBI:30616"/>
    </ligand>
</feature>
<reference key="1">
    <citation type="journal article" date="2000" name="Nature">
        <title>Sequence and analysis of chromosome 1 of the plant Arabidopsis thaliana.</title>
        <authorList>
            <person name="Theologis A."/>
            <person name="Ecker J.R."/>
            <person name="Palm C.J."/>
            <person name="Federspiel N.A."/>
            <person name="Kaul S."/>
            <person name="White O."/>
            <person name="Alonso J."/>
            <person name="Altafi H."/>
            <person name="Araujo R."/>
            <person name="Bowman C.L."/>
            <person name="Brooks S.Y."/>
            <person name="Buehler E."/>
            <person name="Chan A."/>
            <person name="Chao Q."/>
            <person name="Chen H."/>
            <person name="Cheuk R.F."/>
            <person name="Chin C.W."/>
            <person name="Chung M.K."/>
            <person name="Conn L."/>
            <person name="Conway A.B."/>
            <person name="Conway A.R."/>
            <person name="Creasy T.H."/>
            <person name="Dewar K."/>
            <person name="Dunn P."/>
            <person name="Etgu P."/>
            <person name="Feldblyum T.V."/>
            <person name="Feng J.-D."/>
            <person name="Fong B."/>
            <person name="Fujii C.Y."/>
            <person name="Gill J.E."/>
            <person name="Goldsmith A.D."/>
            <person name="Haas B."/>
            <person name="Hansen N.F."/>
            <person name="Hughes B."/>
            <person name="Huizar L."/>
            <person name="Hunter J.L."/>
            <person name="Jenkins J."/>
            <person name="Johnson-Hopson C."/>
            <person name="Khan S."/>
            <person name="Khaykin E."/>
            <person name="Kim C.J."/>
            <person name="Koo H.L."/>
            <person name="Kremenetskaia I."/>
            <person name="Kurtz D.B."/>
            <person name="Kwan A."/>
            <person name="Lam B."/>
            <person name="Langin-Hooper S."/>
            <person name="Lee A."/>
            <person name="Lee J.M."/>
            <person name="Lenz C.A."/>
            <person name="Li J.H."/>
            <person name="Li Y.-P."/>
            <person name="Lin X."/>
            <person name="Liu S.X."/>
            <person name="Liu Z.A."/>
            <person name="Luros J.S."/>
            <person name="Maiti R."/>
            <person name="Marziali A."/>
            <person name="Militscher J."/>
            <person name="Miranda M."/>
            <person name="Nguyen M."/>
            <person name="Nierman W.C."/>
            <person name="Osborne B.I."/>
            <person name="Pai G."/>
            <person name="Peterson J."/>
            <person name="Pham P.K."/>
            <person name="Rizzo M."/>
            <person name="Rooney T."/>
            <person name="Rowley D."/>
            <person name="Sakano H."/>
            <person name="Salzberg S.L."/>
            <person name="Schwartz J.R."/>
            <person name="Shinn P."/>
            <person name="Southwick A.M."/>
            <person name="Sun H."/>
            <person name="Tallon L.J."/>
            <person name="Tambunga G."/>
            <person name="Toriumi M.J."/>
            <person name="Town C.D."/>
            <person name="Utterback T."/>
            <person name="Van Aken S."/>
            <person name="Vaysberg M."/>
            <person name="Vysotskaia V.S."/>
            <person name="Walker M."/>
            <person name="Wu D."/>
            <person name="Yu G."/>
            <person name="Fraser C.M."/>
            <person name="Venter J.C."/>
            <person name="Davis R.W."/>
        </authorList>
    </citation>
    <scope>NUCLEOTIDE SEQUENCE [LARGE SCALE GENOMIC DNA]</scope>
    <source>
        <strain>cv. Columbia</strain>
    </source>
</reference>
<reference key="2">
    <citation type="journal article" date="2017" name="Plant J.">
        <title>Araport11: a complete reannotation of the Arabidopsis thaliana reference genome.</title>
        <authorList>
            <person name="Cheng C.Y."/>
            <person name="Krishnakumar V."/>
            <person name="Chan A.P."/>
            <person name="Thibaud-Nissen F."/>
            <person name="Schobel S."/>
            <person name="Town C.D."/>
        </authorList>
    </citation>
    <scope>GENOME REANNOTATION</scope>
    <source>
        <strain>cv. Columbia</strain>
    </source>
</reference>
<reference key="3">
    <citation type="journal article" date="2004" name="Plant Biotechnol. J.">
        <title>DEAD-box RNA helicases in Arabidopsis thaliana: establishing a link between quantitative expression, gene structure and evolution of a family of genes.</title>
        <authorList>
            <person name="Mingam A."/>
            <person name="Toffano-Nioche C."/>
            <person name="Brunaud V."/>
            <person name="Boudet N."/>
            <person name="Kreis M."/>
            <person name="Lecharny A."/>
        </authorList>
    </citation>
    <scope>GENE FAMILY</scope>
    <scope>NOMENCLATURE</scope>
</reference>
<reference key="4">
    <citation type="journal article" date="2013" name="PLoS ONE">
        <title>Genome-wide comparative in silico analysis of the RNA helicase gene family in Zea mays and Glycine max: a comparison with Arabidopsis and Oryza sativa.</title>
        <authorList>
            <person name="Xu R."/>
            <person name="Zhang S."/>
            <person name="Huang J."/>
            <person name="Zheng C."/>
        </authorList>
    </citation>
    <scope>GENE FAMILY</scope>
</reference>
<sequence length="491" mass="54835">MEEPTPEEEGGITIMSKSRKNPKTVVNIQSQKLDSDQNTPQFEKFTNPNPSSDTTSATNFEGLGLAEWAVETCKELGMRKPTPVQTHCVPKILAGRDVLGLAQTGSGKTAAFALPILHRLAEDPYGVFALVVTPTRELAFQLAEQFKALGSCLNLRCSVIVGGMDMLTQTMSLVSRPHIVITTPGRIKVLLENNPDVPPVFSRTKFLVLDEADRVLDVGFQDELRTIFQCLPKSRQTLLFSATMTSNLQALLEHSSNKAYFYEAYEGLKTVDTLTQQFIFEDKDAKELYLVHILSQMEDKGIRSAMIFVSTCRTCQRLSLMLDELEVENIAMHSLNSQSMRLSALSKFKSGKVPILLATDVASRGLDIPTVDLVINYDIPRDPRDYVHRVGRTARAGRGGLAVSIITETDVKLIHKIEEEVGKKMEPYNKKVITDSLEVTKVSKAKRVAMMKMLDNGFEDKVKDRRKLKRKTLADKGLLKKRGKRQKSTEN</sequence>